<comment type="function">
    <text>Antibacterial peptide. Has activity against E.coli but none against other Gram-negative bacteria and Gram-positive bacteria.</text>
</comment>
<comment type="subcellular location">
    <subcellularLocation>
        <location>Secreted</location>
    </subcellularLocation>
</comment>
<comment type="induction">
    <text>By bacterial infection.</text>
</comment>
<comment type="PTM">
    <text evidence="1">O-linked glycan consists of a Gal-GalNAc disaccharide, O-glycosylation is essential for full biological activity.</text>
</comment>
<name>FORM2_MYRGU</name>
<reference key="1">
    <citation type="journal article" date="1998" name="J. Biol. Chem.">
        <title>Isolation from an ant Myrmecia gulosa of two inducible O-glycosylated proline-rich antibacterial peptides.</title>
        <authorList>
            <person name="Mackintosh J.A."/>
            <person name="Veal D.A."/>
            <person name="Beattie A.J."/>
            <person name="Gooley A.A."/>
        </authorList>
    </citation>
    <scope>PROTEIN SEQUENCE</scope>
    <scope>GLYCOSYLATION AT THR-11</scope>
    <source>
        <tissue>Hemolymph</tissue>
    </source>
</reference>
<evidence type="ECO:0000269" key="1">
    <source>
    </source>
</evidence>
<dbReference type="iPTMnet" id="P81437"/>
<dbReference type="GO" id="GO:0005576">
    <property type="term" value="C:extracellular region"/>
    <property type="evidence" value="ECO:0007669"/>
    <property type="project" value="UniProtKB-SubCell"/>
</dbReference>
<dbReference type="GO" id="GO:0042742">
    <property type="term" value="P:defense response to bacterium"/>
    <property type="evidence" value="ECO:0007669"/>
    <property type="project" value="UniProtKB-KW"/>
</dbReference>
<dbReference type="GO" id="GO:0042381">
    <property type="term" value="P:hemolymph coagulation"/>
    <property type="evidence" value="ECO:0007669"/>
    <property type="project" value="InterPro"/>
</dbReference>
<dbReference type="InterPro" id="IPR012514">
    <property type="entry name" value="Formaecin"/>
</dbReference>
<dbReference type="Pfam" id="PF08106">
    <property type="entry name" value="Antimicrobial11"/>
    <property type="match status" value="1"/>
</dbReference>
<organism>
    <name type="scientific">Myrmecia gulosa</name>
    <name type="common">Red bulldog ant</name>
    <dbReference type="NCBI Taxonomy" id="36170"/>
    <lineage>
        <taxon>Eukaryota</taxon>
        <taxon>Metazoa</taxon>
        <taxon>Ecdysozoa</taxon>
        <taxon>Arthropoda</taxon>
        <taxon>Hexapoda</taxon>
        <taxon>Insecta</taxon>
        <taxon>Pterygota</taxon>
        <taxon>Neoptera</taxon>
        <taxon>Endopterygota</taxon>
        <taxon>Hymenoptera</taxon>
        <taxon>Apocrita</taxon>
        <taxon>Aculeata</taxon>
        <taxon>Formicoidea</taxon>
        <taxon>Formicidae</taxon>
        <taxon>Myrmeciinae</taxon>
        <taxon>Myrmeciini</taxon>
        <taxon>Myrmecia</taxon>
    </lineage>
</organism>
<accession>P81437</accession>
<sequence length="16" mass="1807">GRPNPVNTKPTPYPRL</sequence>
<proteinExistence type="evidence at protein level"/>
<keyword id="KW-0044">Antibiotic</keyword>
<keyword id="KW-0929">Antimicrobial</keyword>
<keyword id="KW-0903">Direct protein sequencing</keyword>
<keyword id="KW-0325">Glycoprotein</keyword>
<keyword id="KW-0391">Immunity</keyword>
<keyword id="KW-0399">Innate immunity</keyword>
<keyword id="KW-0964">Secreted</keyword>
<feature type="peptide" id="PRO_0000043592" description="Formaecin-2">
    <location>
        <begin position="1"/>
        <end position="16"/>
    </location>
</feature>
<feature type="glycosylation site" description="O-linked (GalNAc...) threonine" evidence="1">
    <location>
        <position position="11"/>
    </location>
</feature>
<protein>
    <recommendedName>
        <fullName>Formaecin-2</fullName>
    </recommendedName>
</protein>